<evidence type="ECO:0000255" key="1">
    <source>
        <dbReference type="HAMAP-Rule" id="MF_00804"/>
    </source>
</evidence>
<feature type="chain" id="PRO_1000047030" description="Betaine aldehyde dehydrogenase">
    <location>
        <begin position="1"/>
        <end position="487"/>
    </location>
</feature>
<feature type="active site" description="Charge relay system" evidence="1">
    <location>
        <position position="161"/>
    </location>
</feature>
<feature type="active site" description="Proton acceptor" evidence="1">
    <location>
        <position position="249"/>
    </location>
</feature>
<feature type="active site" description="Nucleophile" evidence="1">
    <location>
        <position position="283"/>
    </location>
</feature>
<feature type="active site" description="Charge relay system" evidence="1">
    <location>
        <position position="461"/>
    </location>
</feature>
<feature type="binding site" evidence="1">
    <location>
        <position position="27"/>
    </location>
    <ligand>
        <name>K(+)</name>
        <dbReference type="ChEBI" id="CHEBI:29103"/>
        <label>1</label>
    </ligand>
</feature>
<feature type="binding site" evidence="1">
    <location>
        <position position="93"/>
    </location>
    <ligand>
        <name>K(+)</name>
        <dbReference type="ChEBI" id="CHEBI:29103"/>
        <label>1</label>
    </ligand>
</feature>
<feature type="binding site" evidence="1">
    <location>
        <begin position="149"/>
        <end position="151"/>
    </location>
    <ligand>
        <name>NAD(+)</name>
        <dbReference type="ChEBI" id="CHEBI:57540"/>
    </ligand>
</feature>
<feature type="binding site" evidence="1">
    <location>
        <begin position="175"/>
        <end position="178"/>
    </location>
    <ligand>
        <name>NAD(+)</name>
        <dbReference type="ChEBI" id="CHEBI:57540"/>
    </ligand>
</feature>
<feature type="binding site" evidence="1">
    <location>
        <begin position="228"/>
        <end position="231"/>
    </location>
    <ligand>
        <name>NAD(+)</name>
        <dbReference type="ChEBI" id="CHEBI:57540"/>
    </ligand>
</feature>
<feature type="binding site" evidence="1">
    <location>
        <position position="243"/>
    </location>
    <ligand>
        <name>K(+)</name>
        <dbReference type="ChEBI" id="CHEBI:29103"/>
        <label>2</label>
    </ligand>
</feature>
<feature type="binding site" evidence="1">
    <location>
        <position position="251"/>
    </location>
    <ligand>
        <name>NAD(+)</name>
        <dbReference type="ChEBI" id="CHEBI:57540"/>
    </ligand>
</feature>
<feature type="binding site" description="covalent" evidence="1">
    <location>
        <position position="283"/>
    </location>
    <ligand>
        <name>NAD(+)</name>
        <dbReference type="ChEBI" id="CHEBI:57540"/>
    </ligand>
</feature>
<feature type="binding site" evidence="1">
    <location>
        <position position="384"/>
    </location>
    <ligand>
        <name>NAD(+)</name>
        <dbReference type="ChEBI" id="CHEBI:57540"/>
    </ligand>
</feature>
<feature type="binding site" evidence="1">
    <location>
        <position position="454"/>
    </location>
    <ligand>
        <name>K(+)</name>
        <dbReference type="ChEBI" id="CHEBI:29103"/>
        <label>2</label>
    </ligand>
</feature>
<feature type="binding site" evidence="1">
    <location>
        <position position="457"/>
    </location>
    <ligand>
        <name>K(+)</name>
        <dbReference type="ChEBI" id="CHEBI:29103"/>
        <label>2</label>
    </ligand>
</feature>
<feature type="modified residue" description="Cysteine sulfenic acid (-SOH)" evidence="1">
    <location>
        <position position="283"/>
    </location>
</feature>
<comment type="function">
    <text evidence="1">Involved in the biosynthesis of the osmoprotectant glycine betaine. Catalyzes the irreversible oxidation of betaine aldehyde to the corresponding acid.</text>
</comment>
<comment type="catalytic activity">
    <reaction evidence="1">
        <text>betaine aldehyde + NAD(+) + H2O = glycine betaine + NADH + 2 H(+)</text>
        <dbReference type="Rhea" id="RHEA:15305"/>
        <dbReference type="ChEBI" id="CHEBI:15377"/>
        <dbReference type="ChEBI" id="CHEBI:15378"/>
        <dbReference type="ChEBI" id="CHEBI:15710"/>
        <dbReference type="ChEBI" id="CHEBI:17750"/>
        <dbReference type="ChEBI" id="CHEBI:57540"/>
        <dbReference type="ChEBI" id="CHEBI:57945"/>
        <dbReference type="EC" id="1.2.1.8"/>
    </reaction>
    <physiologicalReaction direction="left-to-right" evidence="1">
        <dbReference type="Rhea" id="RHEA:15306"/>
    </physiologicalReaction>
</comment>
<comment type="cofactor">
    <cofactor evidence="1">
        <name>K(+)</name>
        <dbReference type="ChEBI" id="CHEBI:29103"/>
    </cofactor>
    <text evidence="1">Binds 2 potassium ions per subunit.</text>
</comment>
<comment type="pathway">
    <text evidence="1">Amine and polyamine biosynthesis; betaine biosynthesis via choline pathway; betaine from betaine aldehyde: step 1/1.</text>
</comment>
<comment type="subunit">
    <text evidence="1">Dimer of dimers.</text>
</comment>
<comment type="similarity">
    <text evidence="1">Belongs to the aldehyde dehydrogenase family.</text>
</comment>
<accession>A5VPA5</accession>
<protein>
    <recommendedName>
        <fullName evidence="1">Betaine aldehyde dehydrogenase</fullName>
        <shortName evidence="1">BADH</shortName>
        <ecNumber evidence="1">1.2.1.8</ecNumber>
    </recommendedName>
</protein>
<sequence>MKAQPKASHFIGGAFVEDKAGKPLPVIYPATGEEIASLYSATPGIIEAAYAAALKAQGEWAALKPVERGRILRRTAEILREKNRKLSKLETLDTGKALQETLVADAASAADALEFFGGIISGFNGEFVELGGSFAYTRREALGICVGIGAWNYPIQIAAWKSAPALAMGNAFIFKPSENTPLSALALAEAYKEAGLPDGLFNVVQGYGDVGAALVNHRLTAKVSLTGSVPTGRRIMAQAGEQLKHVTMELGGKSPLIVFDDADLESAIGGAMLGNFYSTGQVCSNGTRVFVHKNIRERFIERLVERTRKIRIGDPFDEATQMGPLISAAQRDKVLSYIKKGKAEGATLACGGGVPKLQGFDKGFFIEPTVFADVTDTMTIAREEIFGPVMSVLEFSDEDEVIARANDSEFGLAAGVFTADLSRGHHVIGQIKAGTCWINAYNLTPVEVPFGGYKQSGIGRENGIAALAHYSQIKTVYVEMGKVDSPY</sequence>
<gene>
    <name evidence="1" type="primary">betB</name>
    <name type="ordered locus">BOV_0553</name>
</gene>
<proteinExistence type="inferred from homology"/>
<reference key="1">
    <citation type="journal article" date="2009" name="PLoS ONE">
        <title>Genome degradation in Brucella ovis corresponds with narrowing of its host range and tissue tropism.</title>
        <authorList>
            <person name="Tsolis R.M."/>
            <person name="Seshadri R."/>
            <person name="Santos R.L."/>
            <person name="Sangari F.J."/>
            <person name="Lobo J.M."/>
            <person name="de Jong M.F."/>
            <person name="Ren Q."/>
            <person name="Myers G."/>
            <person name="Brinkac L.M."/>
            <person name="Nelson W.C."/>
            <person name="Deboy R.T."/>
            <person name="Angiuoli S."/>
            <person name="Khouri H."/>
            <person name="Dimitrov G."/>
            <person name="Robinson J.R."/>
            <person name="Mulligan S."/>
            <person name="Walker R.L."/>
            <person name="Elzer P.E."/>
            <person name="Hassan K.A."/>
            <person name="Paulsen I.T."/>
        </authorList>
    </citation>
    <scope>NUCLEOTIDE SEQUENCE [LARGE SCALE GENOMIC DNA]</scope>
    <source>
        <strain>ATCC 25840 / 63/290 / NCTC 10512</strain>
    </source>
</reference>
<dbReference type="EC" id="1.2.1.8" evidence="1"/>
<dbReference type="EMBL" id="CP000708">
    <property type="protein sequence ID" value="ABQ61307.1"/>
    <property type="molecule type" value="Genomic_DNA"/>
</dbReference>
<dbReference type="RefSeq" id="WP_002963701.1">
    <property type="nucleotide sequence ID" value="NC_009505.1"/>
</dbReference>
<dbReference type="SMR" id="A5VPA5"/>
<dbReference type="GeneID" id="97534102"/>
<dbReference type="KEGG" id="bov:BOV_0553"/>
<dbReference type="HOGENOM" id="CLU_005391_0_1_5"/>
<dbReference type="PhylomeDB" id="A5VPA5"/>
<dbReference type="UniPathway" id="UPA00529">
    <property type="reaction ID" value="UER00386"/>
</dbReference>
<dbReference type="Proteomes" id="UP000006383">
    <property type="component" value="Chromosome I"/>
</dbReference>
<dbReference type="GO" id="GO:0008802">
    <property type="term" value="F:betaine-aldehyde dehydrogenase (NAD+) activity"/>
    <property type="evidence" value="ECO:0007669"/>
    <property type="project" value="UniProtKB-UniRule"/>
</dbReference>
<dbReference type="GO" id="GO:0046872">
    <property type="term" value="F:metal ion binding"/>
    <property type="evidence" value="ECO:0007669"/>
    <property type="project" value="UniProtKB-KW"/>
</dbReference>
<dbReference type="GO" id="GO:0019285">
    <property type="term" value="P:glycine betaine biosynthetic process from choline"/>
    <property type="evidence" value="ECO:0007669"/>
    <property type="project" value="UniProtKB-UniRule"/>
</dbReference>
<dbReference type="CDD" id="cd07090">
    <property type="entry name" value="ALDH_F9_TMBADH"/>
    <property type="match status" value="1"/>
</dbReference>
<dbReference type="FunFam" id="3.40.605.10:FF:000026">
    <property type="entry name" value="Aldehyde dehydrogenase, putative"/>
    <property type="match status" value="1"/>
</dbReference>
<dbReference type="FunFam" id="3.40.309.10:FF:000014">
    <property type="entry name" value="NAD/NADP-dependent betaine aldehyde dehydrogenase"/>
    <property type="match status" value="1"/>
</dbReference>
<dbReference type="FunFam" id="3.40.605.10:FF:000007">
    <property type="entry name" value="NAD/NADP-dependent betaine aldehyde dehydrogenase"/>
    <property type="match status" value="1"/>
</dbReference>
<dbReference type="Gene3D" id="3.40.605.10">
    <property type="entry name" value="Aldehyde Dehydrogenase, Chain A, domain 1"/>
    <property type="match status" value="1"/>
</dbReference>
<dbReference type="Gene3D" id="3.40.309.10">
    <property type="entry name" value="Aldehyde Dehydrogenase, Chain A, domain 2"/>
    <property type="match status" value="1"/>
</dbReference>
<dbReference type="HAMAP" id="MF_00804">
    <property type="entry name" value="BADH"/>
    <property type="match status" value="1"/>
</dbReference>
<dbReference type="InterPro" id="IPR016161">
    <property type="entry name" value="Ald_DH/histidinol_DH"/>
</dbReference>
<dbReference type="InterPro" id="IPR016163">
    <property type="entry name" value="Ald_DH_C"/>
</dbReference>
<dbReference type="InterPro" id="IPR016160">
    <property type="entry name" value="Ald_DH_CS_CYS"/>
</dbReference>
<dbReference type="InterPro" id="IPR029510">
    <property type="entry name" value="Ald_DH_CS_GLU"/>
</dbReference>
<dbReference type="InterPro" id="IPR016162">
    <property type="entry name" value="Ald_DH_N"/>
</dbReference>
<dbReference type="InterPro" id="IPR015590">
    <property type="entry name" value="Aldehyde_DH_dom"/>
</dbReference>
<dbReference type="InterPro" id="IPR011264">
    <property type="entry name" value="BADH"/>
</dbReference>
<dbReference type="NCBIfam" id="TIGR01804">
    <property type="entry name" value="BADH"/>
    <property type="match status" value="1"/>
</dbReference>
<dbReference type="NCBIfam" id="NF009725">
    <property type="entry name" value="PRK13252.1"/>
    <property type="match status" value="1"/>
</dbReference>
<dbReference type="PANTHER" id="PTHR11699">
    <property type="entry name" value="ALDEHYDE DEHYDROGENASE-RELATED"/>
    <property type="match status" value="1"/>
</dbReference>
<dbReference type="Pfam" id="PF00171">
    <property type="entry name" value="Aldedh"/>
    <property type="match status" value="1"/>
</dbReference>
<dbReference type="SUPFAM" id="SSF53720">
    <property type="entry name" value="ALDH-like"/>
    <property type="match status" value="1"/>
</dbReference>
<dbReference type="PROSITE" id="PS00070">
    <property type="entry name" value="ALDEHYDE_DEHYDR_CYS"/>
    <property type="match status" value="1"/>
</dbReference>
<dbReference type="PROSITE" id="PS00687">
    <property type="entry name" value="ALDEHYDE_DEHYDR_GLU"/>
    <property type="match status" value="1"/>
</dbReference>
<organism>
    <name type="scientific">Brucella ovis (strain ATCC 25840 / 63/290 / NCTC 10512)</name>
    <dbReference type="NCBI Taxonomy" id="444178"/>
    <lineage>
        <taxon>Bacteria</taxon>
        <taxon>Pseudomonadati</taxon>
        <taxon>Pseudomonadota</taxon>
        <taxon>Alphaproteobacteria</taxon>
        <taxon>Hyphomicrobiales</taxon>
        <taxon>Brucellaceae</taxon>
        <taxon>Brucella/Ochrobactrum group</taxon>
        <taxon>Brucella</taxon>
    </lineage>
</organism>
<name>BETB_BRUO2</name>
<keyword id="KW-0479">Metal-binding</keyword>
<keyword id="KW-0520">NAD</keyword>
<keyword id="KW-0521">NADP</keyword>
<keyword id="KW-0558">Oxidation</keyword>
<keyword id="KW-0560">Oxidoreductase</keyword>
<keyword id="KW-0630">Potassium</keyword>